<feature type="chain" id="PRO_0000236668" description="Phosphoribosylformylglycinamidine synthase subunit PurL">
    <location>
        <begin position="1"/>
        <end position="729"/>
    </location>
</feature>
<feature type="active site" evidence="1">
    <location>
        <position position="54"/>
    </location>
</feature>
<feature type="active site" description="Proton acceptor" evidence="1">
    <location>
        <position position="100"/>
    </location>
</feature>
<feature type="binding site" evidence="1">
    <location>
        <position position="57"/>
    </location>
    <ligand>
        <name>ATP</name>
        <dbReference type="ChEBI" id="CHEBI:30616"/>
    </ligand>
</feature>
<feature type="binding site" evidence="1">
    <location>
        <position position="96"/>
    </location>
    <ligand>
        <name>ATP</name>
        <dbReference type="ChEBI" id="CHEBI:30616"/>
    </ligand>
</feature>
<feature type="binding site" evidence="1">
    <location>
        <position position="98"/>
    </location>
    <ligand>
        <name>Mg(2+)</name>
        <dbReference type="ChEBI" id="CHEBI:18420"/>
        <label>1</label>
    </ligand>
</feature>
<feature type="binding site" evidence="1">
    <location>
        <begin position="99"/>
        <end position="102"/>
    </location>
    <ligand>
        <name>substrate</name>
    </ligand>
</feature>
<feature type="binding site" evidence="1">
    <location>
        <position position="121"/>
    </location>
    <ligand>
        <name>substrate</name>
    </ligand>
</feature>
<feature type="binding site" evidence="1">
    <location>
        <position position="122"/>
    </location>
    <ligand>
        <name>Mg(2+)</name>
        <dbReference type="ChEBI" id="CHEBI:18420"/>
        <label>2</label>
    </ligand>
</feature>
<feature type="binding site" evidence="1">
    <location>
        <position position="245"/>
    </location>
    <ligand>
        <name>substrate</name>
    </ligand>
</feature>
<feature type="binding site" evidence="1">
    <location>
        <position position="273"/>
    </location>
    <ligand>
        <name>Mg(2+)</name>
        <dbReference type="ChEBI" id="CHEBI:18420"/>
        <label>2</label>
    </ligand>
</feature>
<feature type="binding site" evidence="1">
    <location>
        <begin position="317"/>
        <end position="319"/>
    </location>
    <ligand>
        <name>substrate</name>
    </ligand>
</feature>
<feature type="binding site" evidence="1">
    <location>
        <position position="495"/>
    </location>
    <ligand>
        <name>ATP</name>
        <dbReference type="ChEBI" id="CHEBI:30616"/>
    </ligand>
</feature>
<feature type="binding site" evidence="1">
    <location>
        <position position="532"/>
    </location>
    <ligand>
        <name>ATP</name>
        <dbReference type="ChEBI" id="CHEBI:30616"/>
    </ligand>
</feature>
<feature type="binding site" evidence="1">
    <location>
        <position position="533"/>
    </location>
    <ligand>
        <name>Mg(2+)</name>
        <dbReference type="ChEBI" id="CHEBI:18420"/>
        <label>1</label>
    </ligand>
</feature>
<feature type="binding site" evidence="1">
    <location>
        <position position="535"/>
    </location>
    <ligand>
        <name>substrate</name>
    </ligand>
</feature>
<dbReference type="EC" id="6.3.5.3" evidence="1"/>
<dbReference type="EMBL" id="AP008934">
    <property type="protein sequence ID" value="BAE18866.1"/>
    <property type="molecule type" value="Genomic_DNA"/>
</dbReference>
<dbReference type="RefSeq" id="WP_011303436.1">
    <property type="nucleotide sequence ID" value="NZ_MTGA01000039.1"/>
</dbReference>
<dbReference type="SMR" id="Q49WJ3"/>
<dbReference type="GeneID" id="3616630"/>
<dbReference type="KEGG" id="ssp:SSP1721"/>
<dbReference type="PATRIC" id="fig|342451.11.peg.1720"/>
<dbReference type="eggNOG" id="COG0046">
    <property type="taxonomic scope" value="Bacteria"/>
</dbReference>
<dbReference type="HOGENOM" id="CLU_003100_0_1_9"/>
<dbReference type="OrthoDB" id="9804441at2"/>
<dbReference type="UniPathway" id="UPA00074">
    <property type="reaction ID" value="UER00128"/>
</dbReference>
<dbReference type="Proteomes" id="UP000006371">
    <property type="component" value="Chromosome"/>
</dbReference>
<dbReference type="GO" id="GO:0005737">
    <property type="term" value="C:cytoplasm"/>
    <property type="evidence" value="ECO:0007669"/>
    <property type="project" value="UniProtKB-SubCell"/>
</dbReference>
<dbReference type="GO" id="GO:0005524">
    <property type="term" value="F:ATP binding"/>
    <property type="evidence" value="ECO:0007669"/>
    <property type="project" value="UniProtKB-UniRule"/>
</dbReference>
<dbReference type="GO" id="GO:0000287">
    <property type="term" value="F:magnesium ion binding"/>
    <property type="evidence" value="ECO:0007669"/>
    <property type="project" value="UniProtKB-UniRule"/>
</dbReference>
<dbReference type="GO" id="GO:0004642">
    <property type="term" value="F:phosphoribosylformylglycinamidine synthase activity"/>
    <property type="evidence" value="ECO:0007669"/>
    <property type="project" value="UniProtKB-UniRule"/>
</dbReference>
<dbReference type="GO" id="GO:0006189">
    <property type="term" value="P:'de novo' IMP biosynthetic process"/>
    <property type="evidence" value="ECO:0007669"/>
    <property type="project" value="UniProtKB-UniRule"/>
</dbReference>
<dbReference type="CDD" id="cd02203">
    <property type="entry name" value="PurL_repeat1"/>
    <property type="match status" value="1"/>
</dbReference>
<dbReference type="CDD" id="cd02204">
    <property type="entry name" value="PurL_repeat2"/>
    <property type="match status" value="1"/>
</dbReference>
<dbReference type="FunFam" id="3.30.1330.10:FF:000004">
    <property type="entry name" value="Phosphoribosylformylglycinamidine synthase subunit PurL"/>
    <property type="match status" value="1"/>
</dbReference>
<dbReference type="Gene3D" id="3.90.650.10">
    <property type="entry name" value="PurM-like C-terminal domain"/>
    <property type="match status" value="2"/>
</dbReference>
<dbReference type="Gene3D" id="3.30.1330.10">
    <property type="entry name" value="PurM-like, N-terminal domain"/>
    <property type="match status" value="2"/>
</dbReference>
<dbReference type="HAMAP" id="MF_00420">
    <property type="entry name" value="PurL_2"/>
    <property type="match status" value="1"/>
</dbReference>
<dbReference type="InterPro" id="IPR010074">
    <property type="entry name" value="PRibForGlyAmidine_synth_PurL"/>
</dbReference>
<dbReference type="InterPro" id="IPR041609">
    <property type="entry name" value="PurL_linker"/>
</dbReference>
<dbReference type="InterPro" id="IPR010918">
    <property type="entry name" value="PurM-like_C_dom"/>
</dbReference>
<dbReference type="InterPro" id="IPR036676">
    <property type="entry name" value="PurM-like_C_sf"/>
</dbReference>
<dbReference type="InterPro" id="IPR016188">
    <property type="entry name" value="PurM-like_N"/>
</dbReference>
<dbReference type="InterPro" id="IPR036921">
    <property type="entry name" value="PurM-like_N_sf"/>
</dbReference>
<dbReference type="NCBIfam" id="TIGR01736">
    <property type="entry name" value="FGAM_synth_II"/>
    <property type="match status" value="1"/>
</dbReference>
<dbReference type="NCBIfam" id="NF002290">
    <property type="entry name" value="PRK01213.1"/>
    <property type="match status" value="1"/>
</dbReference>
<dbReference type="PANTHER" id="PTHR43555">
    <property type="entry name" value="PHOSPHORIBOSYLFORMYLGLYCINAMIDINE SYNTHASE SUBUNIT PURL"/>
    <property type="match status" value="1"/>
</dbReference>
<dbReference type="PANTHER" id="PTHR43555:SF1">
    <property type="entry name" value="PHOSPHORIBOSYLFORMYLGLYCINAMIDINE SYNTHASE SUBUNIT PURL"/>
    <property type="match status" value="1"/>
</dbReference>
<dbReference type="Pfam" id="PF00586">
    <property type="entry name" value="AIRS"/>
    <property type="match status" value="2"/>
</dbReference>
<dbReference type="Pfam" id="PF02769">
    <property type="entry name" value="AIRS_C"/>
    <property type="match status" value="2"/>
</dbReference>
<dbReference type="Pfam" id="PF18072">
    <property type="entry name" value="FGAR-AT_linker"/>
    <property type="match status" value="1"/>
</dbReference>
<dbReference type="PIRSF" id="PIRSF001587">
    <property type="entry name" value="FGAM_synthase_II"/>
    <property type="match status" value="1"/>
</dbReference>
<dbReference type="SUPFAM" id="SSF56042">
    <property type="entry name" value="PurM C-terminal domain-like"/>
    <property type="match status" value="2"/>
</dbReference>
<dbReference type="SUPFAM" id="SSF55326">
    <property type="entry name" value="PurM N-terminal domain-like"/>
    <property type="match status" value="2"/>
</dbReference>
<proteinExistence type="inferred from homology"/>
<sequence>MSKFIEPSSEDIKIEQLYKDMGLSDEEYAKVCDILGREPNFTEIGIFSVMWSEHCSYKHSKPFLTQFPTSGEHVLMGPGEGAGVVDIGDNQAVVFKVESHNHPSAVEPYQGAATGVGGIIRDIVSIGARPINLLNSLRFGELTEKQNRRLLRGVVAGIGGYGNCIGIPTTAGEIEFDDRYDGNPLVNAMCVGIIDHDMVQKGTAKGVGNSVIYVGLKTGRDGIHGATFASEELSEDSESKRPSVQIGDPFVGKKLMEATLEAITFDELVGIQDMGAAGLTSSSSEMAAKGGSGLHLRLEQVPTREQGISPYEMMLSETQERMLLVVEKGTEQKFLDLFDKHELDSAVIGEVTDTDRFVLTYEDEVFADIPVQPLSDEAPVYVLEGTSPEYNETKNDYSSVDVESVFDQLLQHPTIASKRYLYEQYDQQVGANTIVKPGLQASVVRVEGTDKAIASTIDGEARYVFNNPYEGGKIVVAEAYRNLISVGATPLAMTDCLNYGSPEKKEIYQQLADSTKGMAEACEVLSTPVVSGNVSLYNETRETSIFPTPVVGMVGLIDDISYLNHFNPSVGDTLYVVGDTNDDFGGSQIEKLLYGQVNHEFESIDLSQEVRKGESIKQAIREGVASHVQTVGKGGLLLTLARISAHYQLGLQAKLSVTNAQLFSETQGRYIVIVKNGQSLNCDYAVEIGKVTNDQQFKVTNEQSEIVRDVKHLNDLWEGAIPQCMTATD</sequence>
<protein>
    <recommendedName>
        <fullName evidence="1">Phosphoribosylformylglycinamidine synthase subunit PurL</fullName>
        <shortName evidence="1">FGAM synthase</shortName>
        <ecNumber evidence="1">6.3.5.3</ecNumber>
    </recommendedName>
    <alternativeName>
        <fullName evidence="1">Formylglycinamide ribonucleotide amidotransferase subunit II</fullName>
        <shortName evidence="1">FGAR amidotransferase II</shortName>
        <shortName evidence="1">FGAR-AT II</shortName>
    </alternativeName>
    <alternativeName>
        <fullName evidence="1">Glutamine amidotransferase PurL</fullName>
    </alternativeName>
    <alternativeName>
        <fullName evidence="1">Phosphoribosylformylglycinamidine synthase subunit II</fullName>
    </alternativeName>
</protein>
<organism>
    <name type="scientific">Staphylococcus saprophyticus subsp. saprophyticus (strain ATCC 15305 / DSM 20229 / NCIMB 8711 / NCTC 7292 / S-41)</name>
    <dbReference type="NCBI Taxonomy" id="342451"/>
    <lineage>
        <taxon>Bacteria</taxon>
        <taxon>Bacillati</taxon>
        <taxon>Bacillota</taxon>
        <taxon>Bacilli</taxon>
        <taxon>Bacillales</taxon>
        <taxon>Staphylococcaceae</taxon>
        <taxon>Staphylococcus</taxon>
    </lineage>
</organism>
<accession>Q49WJ3</accession>
<gene>
    <name evidence="1" type="primary">purL</name>
    <name type="ordered locus">SSP1721</name>
</gene>
<reference key="1">
    <citation type="journal article" date="2005" name="Proc. Natl. Acad. Sci. U.S.A.">
        <title>Whole genome sequence of Staphylococcus saprophyticus reveals the pathogenesis of uncomplicated urinary tract infection.</title>
        <authorList>
            <person name="Kuroda M."/>
            <person name="Yamashita A."/>
            <person name="Hirakawa H."/>
            <person name="Kumano M."/>
            <person name="Morikawa K."/>
            <person name="Higashide M."/>
            <person name="Maruyama A."/>
            <person name="Inose Y."/>
            <person name="Matoba K."/>
            <person name="Toh H."/>
            <person name="Kuhara S."/>
            <person name="Hattori M."/>
            <person name="Ohta T."/>
        </authorList>
    </citation>
    <scope>NUCLEOTIDE SEQUENCE [LARGE SCALE GENOMIC DNA]</scope>
    <source>
        <strain>ATCC 15305 / DSM 20229 / NCIMB 8711 / NCTC 7292 / S-41</strain>
    </source>
</reference>
<name>PURL_STAS1</name>
<keyword id="KW-0067">ATP-binding</keyword>
<keyword id="KW-0963">Cytoplasm</keyword>
<keyword id="KW-0436">Ligase</keyword>
<keyword id="KW-0460">Magnesium</keyword>
<keyword id="KW-0479">Metal-binding</keyword>
<keyword id="KW-0547">Nucleotide-binding</keyword>
<keyword id="KW-0658">Purine biosynthesis</keyword>
<keyword id="KW-1185">Reference proteome</keyword>
<evidence type="ECO:0000255" key="1">
    <source>
        <dbReference type="HAMAP-Rule" id="MF_00420"/>
    </source>
</evidence>
<comment type="function">
    <text evidence="1">Part of the phosphoribosylformylglycinamidine synthase complex involved in the purines biosynthetic pathway. Catalyzes the ATP-dependent conversion of formylglycinamide ribonucleotide (FGAR) and glutamine to yield formylglycinamidine ribonucleotide (FGAM) and glutamate. The FGAM synthase complex is composed of three subunits. PurQ produces an ammonia molecule by converting glutamine to glutamate. PurL transfers the ammonia molecule to FGAR to form FGAM in an ATP-dependent manner. PurS interacts with PurQ and PurL and is thought to assist in the transfer of the ammonia molecule from PurQ to PurL.</text>
</comment>
<comment type="catalytic activity">
    <reaction evidence="1">
        <text>N(2)-formyl-N(1)-(5-phospho-beta-D-ribosyl)glycinamide + L-glutamine + ATP + H2O = 2-formamido-N(1)-(5-O-phospho-beta-D-ribosyl)acetamidine + L-glutamate + ADP + phosphate + H(+)</text>
        <dbReference type="Rhea" id="RHEA:17129"/>
        <dbReference type="ChEBI" id="CHEBI:15377"/>
        <dbReference type="ChEBI" id="CHEBI:15378"/>
        <dbReference type="ChEBI" id="CHEBI:29985"/>
        <dbReference type="ChEBI" id="CHEBI:30616"/>
        <dbReference type="ChEBI" id="CHEBI:43474"/>
        <dbReference type="ChEBI" id="CHEBI:58359"/>
        <dbReference type="ChEBI" id="CHEBI:147286"/>
        <dbReference type="ChEBI" id="CHEBI:147287"/>
        <dbReference type="ChEBI" id="CHEBI:456216"/>
        <dbReference type="EC" id="6.3.5.3"/>
    </reaction>
</comment>
<comment type="pathway">
    <text evidence="1">Purine metabolism; IMP biosynthesis via de novo pathway; 5-amino-1-(5-phospho-D-ribosyl)imidazole from N(2)-formyl-N(1)-(5-phospho-D-ribosyl)glycinamide: step 1/2.</text>
</comment>
<comment type="subunit">
    <text evidence="1">Monomer. Part of the FGAM synthase complex composed of 1 PurL, 1 PurQ and 2 PurS subunits.</text>
</comment>
<comment type="subcellular location">
    <subcellularLocation>
        <location evidence="1">Cytoplasm</location>
    </subcellularLocation>
</comment>
<comment type="similarity">
    <text evidence="1">Belongs to the FGAMS family.</text>
</comment>